<evidence type="ECO:0000255" key="1">
    <source>
        <dbReference type="HAMAP-Rule" id="MF_01147"/>
    </source>
</evidence>
<sequence>MPLMLVYPAIDPVLVWLGPLPIRWYALAYIAGLLLGWAYARRLAAQPVLWGRRTPPSALEVDDLLVYAAMGVIIGGRLGYVVFYNADFYLEHPLESLSLWKGGMSFHGGLIGTALTIGLLAWRRSIPLAVLTDLAAAAVPIGLCLGRIANFIKPELWGRVADPDFVPFAMVFPGAGSLPRHPSQLYEAFFEGIVLFVILFIAIRLGALRRPGLVTGLFALGYGLARIGCEFFREPDAQLGFLFGGATMGMLLSLPLVLIGLFLVIRAASPKLETA</sequence>
<organism>
    <name type="scientific">Beijerinckia indica subsp. indica (strain ATCC 9039 / DSM 1715 / NCIMB 8712)</name>
    <dbReference type="NCBI Taxonomy" id="395963"/>
    <lineage>
        <taxon>Bacteria</taxon>
        <taxon>Pseudomonadati</taxon>
        <taxon>Pseudomonadota</taxon>
        <taxon>Alphaproteobacteria</taxon>
        <taxon>Hyphomicrobiales</taxon>
        <taxon>Beijerinckiaceae</taxon>
        <taxon>Beijerinckia</taxon>
    </lineage>
</organism>
<dbReference type="EC" id="2.5.1.145" evidence="1"/>
<dbReference type="EMBL" id="CP001016">
    <property type="protein sequence ID" value="ACB97092.1"/>
    <property type="molecule type" value="Genomic_DNA"/>
</dbReference>
<dbReference type="RefSeq" id="WP_012386440.1">
    <property type="nucleotide sequence ID" value="NC_010581.1"/>
</dbReference>
<dbReference type="SMR" id="B2IFJ6"/>
<dbReference type="STRING" id="395963.Bind_3535"/>
<dbReference type="KEGG" id="bid:Bind_3535"/>
<dbReference type="eggNOG" id="COG0682">
    <property type="taxonomic scope" value="Bacteria"/>
</dbReference>
<dbReference type="HOGENOM" id="CLU_013386_1_0_5"/>
<dbReference type="OrthoDB" id="871140at2"/>
<dbReference type="UniPathway" id="UPA00664"/>
<dbReference type="Proteomes" id="UP000001695">
    <property type="component" value="Chromosome"/>
</dbReference>
<dbReference type="GO" id="GO:0005886">
    <property type="term" value="C:plasma membrane"/>
    <property type="evidence" value="ECO:0007669"/>
    <property type="project" value="UniProtKB-SubCell"/>
</dbReference>
<dbReference type="GO" id="GO:0008961">
    <property type="term" value="F:phosphatidylglycerol-prolipoprotein diacylglyceryl transferase activity"/>
    <property type="evidence" value="ECO:0007669"/>
    <property type="project" value="UniProtKB-UniRule"/>
</dbReference>
<dbReference type="GO" id="GO:0042158">
    <property type="term" value="P:lipoprotein biosynthetic process"/>
    <property type="evidence" value="ECO:0007669"/>
    <property type="project" value="UniProtKB-UniRule"/>
</dbReference>
<dbReference type="HAMAP" id="MF_01147">
    <property type="entry name" value="Lgt"/>
    <property type="match status" value="1"/>
</dbReference>
<dbReference type="InterPro" id="IPR001640">
    <property type="entry name" value="Lgt"/>
</dbReference>
<dbReference type="NCBIfam" id="TIGR00544">
    <property type="entry name" value="lgt"/>
    <property type="match status" value="1"/>
</dbReference>
<dbReference type="PANTHER" id="PTHR30589:SF0">
    <property type="entry name" value="PHOSPHATIDYLGLYCEROL--PROLIPOPROTEIN DIACYLGLYCERYL TRANSFERASE"/>
    <property type="match status" value="1"/>
</dbReference>
<dbReference type="PANTHER" id="PTHR30589">
    <property type="entry name" value="PROLIPOPROTEIN DIACYLGLYCERYL TRANSFERASE"/>
    <property type="match status" value="1"/>
</dbReference>
<dbReference type="Pfam" id="PF01790">
    <property type="entry name" value="LGT"/>
    <property type="match status" value="1"/>
</dbReference>
<protein>
    <recommendedName>
        <fullName evidence="1">Phosphatidylglycerol--prolipoprotein diacylglyceryl transferase</fullName>
        <ecNumber evidence="1">2.5.1.145</ecNumber>
    </recommendedName>
</protein>
<comment type="function">
    <text evidence="1">Catalyzes the transfer of the diacylglyceryl group from phosphatidylglycerol to the sulfhydryl group of the N-terminal cysteine of a prolipoprotein, the first step in the formation of mature lipoproteins.</text>
</comment>
<comment type="catalytic activity">
    <reaction evidence="1">
        <text>L-cysteinyl-[prolipoprotein] + a 1,2-diacyl-sn-glycero-3-phospho-(1'-sn-glycerol) = an S-1,2-diacyl-sn-glyceryl-L-cysteinyl-[prolipoprotein] + sn-glycerol 1-phosphate + H(+)</text>
        <dbReference type="Rhea" id="RHEA:56712"/>
        <dbReference type="Rhea" id="RHEA-COMP:14679"/>
        <dbReference type="Rhea" id="RHEA-COMP:14680"/>
        <dbReference type="ChEBI" id="CHEBI:15378"/>
        <dbReference type="ChEBI" id="CHEBI:29950"/>
        <dbReference type="ChEBI" id="CHEBI:57685"/>
        <dbReference type="ChEBI" id="CHEBI:64716"/>
        <dbReference type="ChEBI" id="CHEBI:140658"/>
        <dbReference type="EC" id="2.5.1.145"/>
    </reaction>
</comment>
<comment type="pathway">
    <text evidence="1">Protein modification; lipoprotein biosynthesis (diacylglyceryl transfer).</text>
</comment>
<comment type="subcellular location">
    <subcellularLocation>
        <location evidence="1">Cell inner membrane</location>
        <topology evidence="1">Multi-pass membrane protein</topology>
    </subcellularLocation>
</comment>
<comment type="similarity">
    <text evidence="1">Belongs to the Lgt family.</text>
</comment>
<name>LGT_BEII9</name>
<feature type="chain" id="PRO_1000137402" description="Phosphatidylglycerol--prolipoprotein diacylglyceryl transferase">
    <location>
        <begin position="1"/>
        <end position="275"/>
    </location>
</feature>
<feature type="transmembrane region" description="Helical" evidence="1">
    <location>
        <begin position="64"/>
        <end position="84"/>
    </location>
</feature>
<feature type="transmembrane region" description="Helical" evidence="1">
    <location>
        <begin position="102"/>
        <end position="122"/>
    </location>
</feature>
<feature type="transmembrane region" description="Helical" evidence="1">
    <location>
        <begin position="126"/>
        <end position="146"/>
    </location>
</feature>
<feature type="transmembrane region" description="Helical" evidence="1">
    <location>
        <begin position="188"/>
        <end position="208"/>
    </location>
</feature>
<feature type="transmembrane region" description="Helical" evidence="1">
    <location>
        <begin position="212"/>
        <end position="232"/>
    </location>
</feature>
<feature type="transmembrane region" description="Helical" evidence="1">
    <location>
        <begin position="245"/>
        <end position="265"/>
    </location>
</feature>
<feature type="binding site" evidence="1">
    <location>
        <position position="147"/>
    </location>
    <ligand>
        <name>a 1,2-diacyl-sn-glycero-3-phospho-(1'-sn-glycerol)</name>
        <dbReference type="ChEBI" id="CHEBI:64716"/>
    </ligand>
</feature>
<accession>B2IFJ6</accession>
<keyword id="KW-0997">Cell inner membrane</keyword>
<keyword id="KW-1003">Cell membrane</keyword>
<keyword id="KW-0472">Membrane</keyword>
<keyword id="KW-1185">Reference proteome</keyword>
<keyword id="KW-0808">Transferase</keyword>
<keyword id="KW-0812">Transmembrane</keyword>
<keyword id="KW-1133">Transmembrane helix</keyword>
<reference key="1">
    <citation type="journal article" date="2010" name="J. Bacteriol.">
        <title>Complete genome sequence of Beijerinckia indica subsp. indica.</title>
        <authorList>
            <person name="Tamas I."/>
            <person name="Dedysh S.N."/>
            <person name="Liesack W."/>
            <person name="Stott M.B."/>
            <person name="Alam M."/>
            <person name="Murrell J.C."/>
            <person name="Dunfield P.F."/>
        </authorList>
    </citation>
    <scope>NUCLEOTIDE SEQUENCE [LARGE SCALE GENOMIC DNA]</scope>
    <source>
        <strain>ATCC 9039 / DSM 1715 / NCIMB 8712</strain>
    </source>
</reference>
<gene>
    <name evidence="1" type="primary">lgt</name>
    <name type="ordered locus">Bind_3535</name>
</gene>
<proteinExistence type="inferred from homology"/>